<organism>
    <name type="scientific">Salmonella agona (strain SL483)</name>
    <dbReference type="NCBI Taxonomy" id="454166"/>
    <lineage>
        <taxon>Bacteria</taxon>
        <taxon>Pseudomonadati</taxon>
        <taxon>Pseudomonadota</taxon>
        <taxon>Gammaproteobacteria</taxon>
        <taxon>Enterobacterales</taxon>
        <taxon>Enterobacteriaceae</taxon>
        <taxon>Salmonella</taxon>
    </lineage>
</organism>
<evidence type="ECO:0000255" key="1">
    <source>
        <dbReference type="HAMAP-Rule" id="MF_01115"/>
    </source>
</evidence>
<comment type="subcellular location">
    <subcellularLocation>
        <location evidence="1">Cell membrane</location>
        <topology evidence="1">Multi-pass membrane protein</topology>
    </subcellularLocation>
</comment>
<comment type="similarity">
    <text evidence="1">Belongs to the chloride channel (TC 2.A.49) family.</text>
</comment>
<sequence length="411" mass="42984">MFHPRARTMLLLSLPALIIGVASSLVLIAAMKVASVFQQFLWQRLPTSIGIAYDSPFWIVGMLTLTGIVVGLIIRYSPGHAGPDPAIEPLISMPVSPSALPGLLLALIIGLAGGVSLGPEHPIMTINIALAAAFGSRLFPRITALDWTILASAGTIGALFGTPVAAALIFSQTLSGSNDIPMWDRLFAPLMAAAAGSLTTSLFFHPHFSLPIAHYTQMRLVDIASGAIVAAIAIAAGMVAVWCLPRLHELLHRLKNPVLILGIGGFILGILGVIGGPLTLFKGLDEMQQMAFSQTLGAGDYFTLAVVKLAALVIAAASGFRGGRIFPAVFIGAALGLMLHAHVEAVPAAITVSCAILGLVLVVTRDGWLSLFMAAVVVPDTNLLPLLCIVMLPAWLLLAGKPLLAANRHEP</sequence>
<name>YFEO_SALA4</name>
<gene>
    <name evidence="1" type="primary">yfeO</name>
    <name type="ordered locus">SeAg_B2547</name>
</gene>
<feature type="chain" id="PRO_1000137216" description="Putative ion-transport protein YfeO">
    <location>
        <begin position="1"/>
        <end position="411"/>
    </location>
</feature>
<feature type="transmembrane region" description="Helical" evidence="1">
    <location>
        <begin position="9"/>
        <end position="29"/>
    </location>
</feature>
<feature type="transmembrane region" description="Helical" evidence="1">
    <location>
        <begin position="54"/>
        <end position="74"/>
    </location>
</feature>
<feature type="transmembrane region" description="Helical" evidence="1">
    <location>
        <begin position="99"/>
        <end position="119"/>
    </location>
</feature>
<feature type="transmembrane region" description="Helical" evidence="1">
    <location>
        <begin position="149"/>
        <end position="169"/>
    </location>
</feature>
<feature type="transmembrane region" description="Helical" evidence="1">
    <location>
        <begin position="186"/>
        <end position="206"/>
    </location>
</feature>
<feature type="transmembrane region" description="Helical" evidence="1">
    <location>
        <begin position="223"/>
        <end position="243"/>
    </location>
</feature>
<feature type="transmembrane region" description="Helical" evidence="1">
    <location>
        <begin position="258"/>
        <end position="278"/>
    </location>
</feature>
<feature type="transmembrane region" description="Helical" evidence="1">
    <location>
        <begin position="296"/>
        <end position="316"/>
    </location>
</feature>
<feature type="transmembrane region" description="Helical" evidence="1">
    <location>
        <begin position="322"/>
        <end position="342"/>
    </location>
</feature>
<feature type="transmembrane region" description="Helical" evidence="1">
    <location>
        <begin position="343"/>
        <end position="363"/>
    </location>
</feature>
<feature type="transmembrane region" description="Helical" evidence="1">
    <location>
        <begin position="386"/>
        <end position="406"/>
    </location>
</feature>
<proteinExistence type="inferred from homology"/>
<keyword id="KW-1003">Cell membrane</keyword>
<keyword id="KW-0407">Ion channel</keyword>
<keyword id="KW-0406">Ion transport</keyword>
<keyword id="KW-0472">Membrane</keyword>
<keyword id="KW-0812">Transmembrane</keyword>
<keyword id="KW-1133">Transmembrane helix</keyword>
<keyword id="KW-0813">Transport</keyword>
<accession>B5F0D7</accession>
<protein>
    <recommendedName>
        <fullName evidence="1">Putative ion-transport protein YfeO</fullName>
    </recommendedName>
</protein>
<dbReference type="EMBL" id="CP001138">
    <property type="protein sequence ID" value="ACH50543.1"/>
    <property type="molecule type" value="Genomic_DNA"/>
</dbReference>
<dbReference type="RefSeq" id="WP_000468920.1">
    <property type="nucleotide sequence ID" value="NC_011149.1"/>
</dbReference>
<dbReference type="SMR" id="B5F0D7"/>
<dbReference type="KEGG" id="sea:SeAg_B2547"/>
<dbReference type="HOGENOM" id="CLU_053130_0_0_6"/>
<dbReference type="Proteomes" id="UP000008819">
    <property type="component" value="Chromosome"/>
</dbReference>
<dbReference type="GO" id="GO:0005886">
    <property type="term" value="C:plasma membrane"/>
    <property type="evidence" value="ECO:0007669"/>
    <property type="project" value="UniProtKB-SubCell"/>
</dbReference>
<dbReference type="GO" id="GO:0015108">
    <property type="term" value="F:chloride transmembrane transporter activity"/>
    <property type="evidence" value="ECO:0007669"/>
    <property type="project" value="InterPro"/>
</dbReference>
<dbReference type="GO" id="GO:0005216">
    <property type="term" value="F:monoatomic ion channel activity"/>
    <property type="evidence" value="ECO:0007669"/>
    <property type="project" value="UniProtKB-UniRule"/>
</dbReference>
<dbReference type="CDD" id="cd00400">
    <property type="entry name" value="Voltage_gated_ClC"/>
    <property type="match status" value="1"/>
</dbReference>
<dbReference type="FunFam" id="1.10.3080.10:FF:000007">
    <property type="entry name" value="Putative ion-transport protein YfeO"/>
    <property type="match status" value="1"/>
</dbReference>
<dbReference type="Gene3D" id="1.10.3080.10">
    <property type="entry name" value="Clc chloride channel"/>
    <property type="match status" value="1"/>
</dbReference>
<dbReference type="HAMAP" id="MF_01115">
    <property type="entry name" value="CLC_YfeO"/>
    <property type="match status" value="1"/>
</dbReference>
<dbReference type="InterPro" id="IPR022969">
    <property type="entry name" value="Chloride_channel_YfeO"/>
</dbReference>
<dbReference type="InterPro" id="IPR014743">
    <property type="entry name" value="Cl-channel_core"/>
</dbReference>
<dbReference type="InterPro" id="IPR001807">
    <property type="entry name" value="ClC"/>
</dbReference>
<dbReference type="InterPro" id="IPR050368">
    <property type="entry name" value="ClC-type_chloride_channel"/>
</dbReference>
<dbReference type="NCBIfam" id="NF002971">
    <property type="entry name" value="PRK03655.1"/>
    <property type="match status" value="1"/>
</dbReference>
<dbReference type="PANTHER" id="PTHR43427">
    <property type="entry name" value="CHLORIDE CHANNEL PROTEIN CLC-E"/>
    <property type="match status" value="1"/>
</dbReference>
<dbReference type="PANTHER" id="PTHR43427:SF9">
    <property type="entry name" value="ION-TRANSPORT PROTEIN YFEO-RELATED"/>
    <property type="match status" value="1"/>
</dbReference>
<dbReference type="Pfam" id="PF00654">
    <property type="entry name" value="Voltage_CLC"/>
    <property type="match status" value="1"/>
</dbReference>
<dbReference type="PRINTS" id="PR00762">
    <property type="entry name" value="CLCHANNEL"/>
</dbReference>
<dbReference type="SUPFAM" id="SSF81340">
    <property type="entry name" value="Clc chloride channel"/>
    <property type="match status" value="1"/>
</dbReference>
<reference key="1">
    <citation type="journal article" date="2011" name="J. Bacteriol.">
        <title>Comparative genomics of 28 Salmonella enterica isolates: evidence for CRISPR-mediated adaptive sublineage evolution.</title>
        <authorList>
            <person name="Fricke W.F."/>
            <person name="Mammel M.K."/>
            <person name="McDermott P.F."/>
            <person name="Tartera C."/>
            <person name="White D.G."/>
            <person name="Leclerc J.E."/>
            <person name="Ravel J."/>
            <person name="Cebula T.A."/>
        </authorList>
    </citation>
    <scope>NUCLEOTIDE SEQUENCE [LARGE SCALE GENOMIC DNA]</scope>
    <source>
        <strain>SL483</strain>
    </source>
</reference>